<protein>
    <recommendedName>
        <fullName evidence="1">Chaperone protein DnaJ</fullName>
    </recommendedName>
</protein>
<sequence length="374" mass="41729">MQQKCYYEILNVSKTASGVEIKRAYRKLAMEYHPDRNPGDKEAEIKFKEISEAYEILSDDSKRSRYDQFGHAGVNQQSGFGGTGGFGGFEDIFDTFFGGGTSRGSNRSRASRGSDLEYTLEITLEEAFFGVEKEITIPRMESCDSCDGTGSKSRSKTTCHACHGQGTIRRQQGFFAFEQTCPVCNGTGYSITDPCDACYGNGKVKKQKTLKVKIPEGVDNGDRIRLQGEGDSGSNGAMNGDLYVQIIIKEHKIFERRDINLYCEMPISFTKACLGGDIKVPTLDGEVVLKVVPETQTGKVFRLREKGMKSLRGHRRGDLLCKVVVETPVNLSAEQKELLEKFADSLGEDYQSKHAPKSKTWFDNVKDYAKKFFE</sequence>
<accession>Q14GX0</accession>
<comment type="function">
    <text evidence="1">Participates actively in the response to hyperosmotic and heat shock by preventing the aggregation of stress-denatured proteins and by disaggregating proteins, also in an autonomous, DnaK-independent fashion. Unfolded proteins bind initially to DnaJ; upon interaction with the DnaJ-bound protein, DnaK hydrolyzes its bound ATP, resulting in the formation of a stable complex. GrpE releases ADP from DnaK; ATP binding to DnaK triggers the release of the substrate protein, thus completing the reaction cycle. Several rounds of ATP-dependent interactions between DnaJ, DnaK and GrpE are required for fully efficient folding. Also involved, together with DnaK and GrpE, in the DNA replication of plasmids through activation of initiation proteins.</text>
</comment>
<comment type="cofactor">
    <cofactor evidence="1">
        <name>Zn(2+)</name>
        <dbReference type="ChEBI" id="CHEBI:29105"/>
    </cofactor>
    <text evidence="1">Binds 2 Zn(2+) ions per monomer.</text>
</comment>
<comment type="subunit">
    <text evidence="1">Homodimer.</text>
</comment>
<comment type="subcellular location">
    <subcellularLocation>
        <location evidence="1">Cytoplasm</location>
    </subcellularLocation>
</comment>
<comment type="domain">
    <text evidence="1">The J domain is necessary and sufficient to stimulate DnaK ATPase activity. Zinc center 1 plays an important role in the autonomous, DnaK-independent chaperone activity of DnaJ. Zinc center 2 is essential for interaction with DnaK and for DnaJ activity.</text>
</comment>
<comment type="similarity">
    <text evidence="1">Belongs to the DnaJ family.</text>
</comment>
<dbReference type="EMBL" id="AM286280">
    <property type="protein sequence ID" value="CAL09284.1"/>
    <property type="molecule type" value="Genomic_DNA"/>
</dbReference>
<dbReference type="RefSeq" id="WP_003029556.1">
    <property type="nucleotide sequence ID" value="NC_008245.1"/>
</dbReference>
<dbReference type="SMR" id="Q14GX0"/>
<dbReference type="KEGG" id="ftf:FTF1268c"/>
<dbReference type="HOGENOM" id="CLU_017633_0_7_6"/>
<dbReference type="GO" id="GO:0005737">
    <property type="term" value="C:cytoplasm"/>
    <property type="evidence" value="ECO:0007669"/>
    <property type="project" value="UniProtKB-SubCell"/>
</dbReference>
<dbReference type="GO" id="GO:0005524">
    <property type="term" value="F:ATP binding"/>
    <property type="evidence" value="ECO:0007669"/>
    <property type="project" value="InterPro"/>
</dbReference>
<dbReference type="GO" id="GO:0031072">
    <property type="term" value="F:heat shock protein binding"/>
    <property type="evidence" value="ECO:0007669"/>
    <property type="project" value="InterPro"/>
</dbReference>
<dbReference type="GO" id="GO:0051082">
    <property type="term" value="F:unfolded protein binding"/>
    <property type="evidence" value="ECO:0007669"/>
    <property type="project" value="UniProtKB-UniRule"/>
</dbReference>
<dbReference type="GO" id="GO:0008270">
    <property type="term" value="F:zinc ion binding"/>
    <property type="evidence" value="ECO:0007669"/>
    <property type="project" value="UniProtKB-UniRule"/>
</dbReference>
<dbReference type="GO" id="GO:0051085">
    <property type="term" value="P:chaperone cofactor-dependent protein refolding"/>
    <property type="evidence" value="ECO:0007669"/>
    <property type="project" value="TreeGrafter"/>
</dbReference>
<dbReference type="GO" id="GO:0006260">
    <property type="term" value="P:DNA replication"/>
    <property type="evidence" value="ECO:0007669"/>
    <property type="project" value="UniProtKB-KW"/>
</dbReference>
<dbReference type="GO" id="GO:0042026">
    <property type="term" value="P:protein refolding"/>
    <property type="evidence" value="ECO:0007669"/>
    <property type="project" value="TreeGrafter"/>
</dbReference>
<dbReference type="GO" id="GO:0009408">
    <property type="term" value="P:response to heat"/>
    <property type="evidence" value="ECO:0007669"/>
    <property type="project" value="InterPro"/>
</dbReference>
<dbReference type="CDD" id="cd06257">
    <property type="entry name" value="DnaJ"/>
    <property type="match status" value="1"/>
</dbReference>
<dbReference type="CDD" id="cd10747">
    <property type="entry name" value="DnaJ_C"/>
    <property type="match status" value="1"/>
</dbReference>
<dbReference type="CDD" id="cd10719">
    <property type="entry name" value="DnaJ_zf"/>
    <property type="match status" value="1"/>
</dbReference>
<dbReference type="FunFam" id="1.10.287.110:FF:000034">
    <property type="entry name" value="Chaperone protein DnaJ"/>
    <property type="match status" value="1"/>
</dbReference>
<dbReference type="FunFam" id="2.10.230.10:FF:000002">
    <property type="entry name" value="Molecular chaperone DnaJ"/>
    <property type="match status" value="1"/>
</dbReference>
<dbReference type="FunFam" id="2.60.260.20:FF:000004">
    <property type="entry name" value="Molecular chaperone DnaJ"/>
    <property type="match status" value="1"/>
</dbReference>
<dbReference type="Gene3D" id="1.10.287.110">
    <property type="entry name" value="DnaJ domain"/>
    <property type="match status" value="1"/>
</dbReference>
<dbReference type="Gene3D" id="2.10.230.10">
    <property type="entry name" value="Heat shock protein DnaJ, cysteine-rich domain"/>
    <property type="match status" value="1"/>
</dbReference>
<dbReference type="Gene3D" id="2.60.260.20">
    <property type="entry name" value="Urease metallochaperone UreE, N-terminal domain"/>
    <property type="match status" value="2"/>
</dbReference>
<dbReference type="HAMAP" id="MF_01152">
    <property type="entry name" value="DnaJ"/>
    <property type="match status" value="1"/>
</dbReference>
<dbReference type="InterPro" id="IPR012724">
    <property type="entry name" value="DnaJ"/>
</dbReference>
<dbReference type="InterPro" id="IPR002939">
    <property type="entry name" value="DnaJ_C"/>
</dbReference>
<dbReference type="InterPro" id="IPR001623">
    <property type="entry name" value="DnaJ_domain"/>
</dbReference>
<dbReference type="InterPro" id="IPR018253">
    <property type="entry name" value="DnaJ_domain_CS"/>
</dbReference>
<dbReference type="InterPro" id="IPR008971">
    <property type="entry name" value="HSP40/DnaJ_pept-bd"/>
</dbReference>
<dbReference type="InterPro" id="IPR001305">
    <property type="entry name" value="HSP_DnaJ_Cys-rich_dom"/>
</dbReference>
<dbReference type="InterPro" id="IPR036410">
    <property type="entry name" value="HSP_DnaJ_Cys-rich_dom_sf"/>
</dbReference>
<dbReference type="InterPro" id="IPR036869">
    <property type="entry name" value="J_dom_sf"/>
</dbReference>
<dbReference type="NCBIfam" id="TIGR02349">
    <property type="entry name" value="DnaJ_bact"/>
    <property type="match status" value="1"/>
</dbReference>
<dbReference type="NCBIfam" id="NF008035">
    <property type="entry name" value="PRK10767.1"/>
    <property type="match status" value="1"/>
</dbReference>
<dbReference type="PANTHER" id="PTHR43096:SF48">
    <property type="entry name" value="CHAPERONE PROTEIN DNAJ"/>
    <property type="match status" value="1"/>
</dbReference>
<dbReference type="PANTHER" id="PTHR43096">
    <property type="entry name" value="DNAJ HOMOLOG 1, MITOCHONDRIAL-RELATED"/>
    <property type="match status" value="1"/>
</dbReference>
<dbReference type="Pfam" id="PF00226">
    <property type="entry name" value="DnaJ"/>
    <property type="match status" value="1"/>
</dbReference>
<dbReference type="Pfam" id="PF01556">
    <property type="entry name" value="DnaJ_C"/>
    <property type="match status" value="1"/>
</dbReference>
<dbReference type="Pfam" id="PF00684">
    <property type="entry name" value="DnaJ_CXXCXGXG"/>
    <property type="match status" value="1"/>
</dbReference>
<dbReference type="PRINTS" id="PR00625">
    <property type="entry name" value="JDOMAIN"/>
</dbReference>
<dbReference type="SMART" id="SM00271">
    <property type="entry name" value="DnaJ"/>
    <property type="match status" value="1"/>
</dbReference>
<dbReference type="SUPFAM" id="SSF46565">
    <property type="entry name" value="Chaperone J-domain"/>
    <property type="match status" value="1"/>
</dbReference>
<dbReference type="SUPFAM" id="SSF57938">
    <property type="entry name" value="DnaJ/Hsp40 cysteine-rich domain"/>
    <property type="match status" value="1"/>
</dbReference>
<dbReference type="SUPFAM" id="SSF49493">
    <property type="entry name" value="HSP40/DnaJ peptide-binding domain"/>
    <property type="match status" value="2"/>
</dbReference>
<dbReference type="PROSITE" id="PS00636">
    <property type="entry name" value="DNAJ_1"/>
    <property type="match status" value="1"/>
</dbReference>
<dbReference type="PROSITE" id="PS50076">
    <property type="entry name" value="DNAJ_2"/>
    <property type="match status" value="1"/>
</dbReference>
<dbReference type="PROSITE" id="PS51188">
    <property type="entry name" value="ZF_CR"/>
    <property type="match status" value="1"/>
</dbReference>
<gene>
    <name evidence="1" type="primary">dnaJ</name>
    <name type="ordered locus">FTF1268c</name>
</gene>
<reference key="1">
    <citation type="journal article" date="2007" name="PLoS ONE">
        <title>Genome sequencing shows that European isolates of Francisella tularensis subspecies tularensis are almost identical to US laboratory strain Schu S4.</title>
        <authorList>
            <person name="Chaudhuri R.R."/>
            <person name="Ren C.-P."/>
            <person name="Desmond L."/>
            <person name="Vincent G.A."/>
            <person name="Silman N.J."/>
            <person name="Brehm J.K."/>
            <person name="Elmore M.J."/>
            <person name="Hudson M.J."/>
            <person name="Forsman M."/>
            <person name="Isherwood K.E."/>
            <person name="Gurycova D."/>
            <person name="Minton N.P."/>
            <person name="Titball R.W."/>
            <person name="Pallen M.J."/>
            <person name="Vipond R."/>
        </authorList>
    </citation>
    <scope>NUCLEOTIDE SEQUENCE [LARGE SCALE GENOMIC DNA]</scope>
    <source>
        <strain>FSC 198</strain>
    </source>
</reference>
<feature type="chain" id="PRO_1000085196" description="Chaperone protein DnaJ">
    <location>
        <begin position="1"/>
        <end position="374"/>
    </location>
</feature>
<feature type="domain" description="J" evidence="1">
    <location>
        <begin position="5"/>
        <end position="70"/>
    </location>
</feature>
<feature type="repeat" description="CXXCXGXG motif">
    <location>
        <begin position="143"/>
        <end position="150"/>
    </location>
</feature>
<feature type="repeat" description="CXXCXGXG motif">
    <location>
        <begin position="159"/>
        <end position="166"/>
    </location>
</feature>
<feature type="repeat" description="CXXCXGXG motif">
    <location>
        <begin position="181"/>
        <end position="188"/>
    </location>
</feature>
<feature type="repeat" description="CXXCXGXG motif">
    <location>
        <begin position="195"/>
        <end position="202"/>
    </location>
</feature>
<feature type="zinc finger region" description="CR-type" evidence="1">
    <location>
        <begin position="130"/>
        <end position="207"/>
    </location>
</feature>
<feature type="binding site" evidence="1">
    <location>
        <position position="143"/>
    </location>
    <ligand>
        <name>Zn(2+)</name>
        <dbReference type="ChEBI" id="CHEBI:29105"/>
        <label>1</label>
    </ligand>
</feature>
<feature type="binding site" evidence="1">
    <location>
        <position position="146"/>
    </location>
    <ligand>
        <name>Zn(2+)</name>
        <dbReference type="ChEBI" id="CHEBI:29105"/>
        <label>1</label>
    </ligand>
</feature>
<feature type="binding site" evidence="1">
    <location>
        <position position="159"/>
    </location>
    <ligand>
        <name>Zn(2+)</name>
        <dbReference type="ChEBI" id="CHEBI:29105"/>
        <label>2</label>
    </ligand>
</feature>
<feature type="binding site" evidence="1">
    <location>
        <position position="162"/>
    </location>
    <ligand>
        <name>Zn(2+)</name>
        <dbReference type="ChEBI" id="CHEBI:29105"/>
        <label>2</label>
    </ligand>
</feature>
<feature type="binding site" evidence="1">
    <location>
        <position position="181"/>
    </location>
    <ligand>
        <name>Zn(2+)</name>
        <dbReference type="ChEBI" id="CHEBI:29105"/>
        <label>2</label>
    </ligand>
</feature>
<feature type="binding site" evidence="1">
    <location>
        <position position="184"/>
    </location>
    <ligand>
        <name>Zn(2+)</name>
        <dbReference type="ChEBI" id="CHEBI:29105"/>
        <label>2</label>
    </ligand>
</feature>
<feature type="binding site" evidence="1">
    <location>
        <position position="195"/>
    </location>
    <ligand>
        <name>Zn(2+)</name>
        <dbReference type="ChEBI" id="CHEBI:29105"/>
        <label>1</label>
    </ligand>
</feature>
<feature type="binding site" evidence="1">
    <location>
        <position position="198"/>
    </location>
    <ligand>
        <name>Zn(2+)</name>
        <dbReference type="ChEBI" id="CHEBI:29105"/>
        <label>1</label>
    </ligand>
</feature>
<organism>
    <name type="scientific">Francisella tularensis subsp. tularensis (strain FSC 198)</name>
    <dbReference type="NCBI Taxonomy" id="393115"/>
    <lineage>
        <taxon>Bacteria</taxon>
        <taxon>Pseudomonadati</taxon>
        <taxon>Pseudomonadota</taxon>
        <taxon>Gammaproteobacteria</taxon>
        <taxon>Thiotrichales</taxon>
        <taxon>Francisellaceae</taxon>
        <taxon>Francisella</taxon>
    </lineage>
</organism>
<evidence type="ECO:0000255" key="1">
    <source>
        <dbReference type="HAMAP-Rule" id="MF_01152"/>
    </source>
</evidence>
<keyword id="KW-0143">Chaperone</keyword>
<keyword id="KW-0963">Cytoplasm</keyword>
<keyword id="KW-0235">DNA replication</keyword>
<keyword id="KW-0479">Metal-binding</keyword>
<keyword id="KW-0677">Repeat</keyword>
<keyword id="KW-0346">Stress response</keyword>
<keyword id="KW-0862">Zinc</keyword>
<keyword id="KW-0863">Zinc-finger</keyword>
<name>DNAJ_FRAT1</name>
<proteinExistence type="inferred from homology"/>